<gene>
    <name evidence="1" type="primary">aroE</name>
    <name type="ordered locus">Daro_3907</name>
</gene>
<reference key="1">
    <citation type="journal article" date="2009" name="BMC Genomics">
        <title>Metabolic analysis of the soil microbe Dechloromonas aromatica str. RCB: indications of a surprisingly complex life-style and cryptic anaerobic pathways for aromatic degradation.</title>
        <authorList>
            <person name="Salinero K.K."/>
            <person name="Keller K."/>
            <person name="Feil W.S."/>
            <person name="Feil H."/>
            <person name="Trong S."/>
            <person name="Di Bartolo G."/>
            <person name="Lapidus A."/>
        </authorList>
    </citation>
    <scope>NUCLEOTIDE SEQUENCE [LARGE SCALE GENOMIC DNA]</scope>
    <source>
        <strain>RCB</strain>
    </source>
</reference>
<feature type="chain" id="PRO_0000325115" description="Shikimate dehydrogenase (NADP(+))">
    <location>
        <begin position="1"/>
        <end position="274"/>
    </location>
</feature>
<feature type="active site" description="Proton acceptor" evidence="1">
    <location>
        <position position="66"/>
    </location>
</feature>
<feature type="binding site" evidence="1">
    <location>
        <begin position="15"/>
        <end position="17"/>
    </location>
    <ligand>
        <name>shikimate</name>
        <dbReference type="ChEBI" id="CHEBI:36208"/>
    </ligand>
</feature>
<feature type="binding site" evidence="1">
    <location>
        <position position="62"/>
    </location>
    <ligand>
        <name>shikimate</name>
        <dbReference type="ChEBI" id="CHEBI:36208"/>
    </ligand>
</feature>
<feature type="binding site" evidence="1">
    <location>
        <position position="78"/>
    </location>
    <ligand>
        <name>NADP(+)</name>
        <dbReference type="ChEBI" id="CHEBI:58349"/>
    </ligand>
</feature>
<feature type="binding site" evidence="1">
    <location>
        <position position="87"/>
    </location>
    <ligand>
        <name>shikimate</name>
        <dbReference type="ChEBI" id="CHEBI:36208"/>
    </ligand>
</feature>
<feature type="binding site" evidence="1">
    <location>
        <position position="102"/>
    </location>
    <ligand>
        <name>shikimate</name>
        <dbReference type="ChEBI" id="CHEBI:36208"/>
    </ligand>
</feature>
<feature type="binding site" evidence="1">
    <location>
        <begin position="127"/>
        <end position="131"/>
    </location>
    <ligand>
        <name>NADP(+)</name>
        <dbReference type="ChEBI" id="CHEBI:58349"/>
    </ligand>
</feature>
<feature type="binding site" evidence="1">
    <location>
        <position position="215"/>
    </location>
    <ligand>
        <name>NADP(+)</name>
        <dbReference type="ChEBI" id="CHEBI:58349"/>
    </ligand>
</feature>
<feature type="binding site" evidence="1">
    <location>
        <position position="217"/>
    </location>
    <ligand>
        <name>shikimate</name>
        <dbReference type="ChEBI" id="CHEBI:36208"/>
    </ligand>
</feature>
<feature type="binding site" evidence="1">
    <location>
        <position position="239"/>
    </location>
    <ligand>
        <name>NADP(+)</name>
        <dbReference type="ChEBI" id="CHEBI:58349"/>
    </ligand>
</feature>
<accession>Q478U6</accession>
<proteinExistence type="inferred from homology"/>
<protein>
    <recommendedName>
        <fullName evidence="1">Shikimate dehydrogenase (NADP(+))</fullName>
        <shortName evidence="1">SDH</shortName>
        <ecNumber evidence="1">1.1.1.25</ecNumber>
    </recommendedName>
</protein>
<keyword id="KW-0028">Amino-acid biosynthesis</keyword>
<keyword id="KW-0057">Aromatic amino acid biosynthesis</keyword>
<keyword id="KW-0521">NADP</keyword>
<keyword id="KW-0560">Oxidoreductase</keyword>
<sequence length="274" mass="28198">MSDLYCVFGNPIAHSKSPAIHAAFAVQTAQDLRYEARLAALDGFGLAIAEFVAVGGKGANVTVPFKEEAYRLATRLSDRAARAGAVNTLVFDGPEVFGDNTDGAGLVRDITNNLGFSLVGKRILLLGAGGASRGVIAPLLAEKPASLIIANRSADKAVALAQAFADMAPLGGGSFAETAGKSFDLVINATSASLSGASLPLPPGIFAPGSLAYDMMYGKGETPFLTLARQQGAARCADGLGMLVEQAAEAFFVWRGIRPGTAQVLAELRAKLVA</sequence>
<name>AROE_DECAR</name>
<evidence type="ECO:0000255" key="1">
    <source>
        <dbReference type="HAMAP-Rule" id="MF_00222"/>
    </source>
</evidence>
<dbReference type="EC" id="1.1.1.25" evidence="1"/>
<dbReference type="EMBL" id="CP000089">
    <property type="protein sequence ID" value="AAZ48635.1"/>
    <property type="molecule type" value="Genomic_DNA"/>
</dbReference>
<dbReference type="SMR" id="Q478U6"/>
<dbReference type="STRING" id="159087.Daro_3907"/>
<dbReference type="KEGG" id="dar:Daro_3907"/>
<dbReference type="eggNOG" id="COG0169">
    <property type="taxonomic scope" value="Bacteria"/>
</dbReference>
<dbReference type="HOGENOM" id="CLU_044063_2_1_4"/>
<dbReference type="OrthoDB" id="9776868at2"/>
<dbReference type="UniPathway" id="UPA00053">
    <property type="reaction ID" value="UER00087"/>
</dbReference>
<dbReference type="GO" id="GO:0005829">
    <property type="term" value="C:cytosol"/>
    <property type="evidence" value="ECO:0007669"/>
    <property type="project" value="TreeGrafter"/>
</dbReference>
<dbReference type="GO" id="GO:0050661">
    <property type="term" value="F:NADP binding"/>
    <property type="evidence" value="ECO:0007669"/>
    <property type="project" value="InterPro"/>
</dbReference>
<dbReference type="GO" id="GO:0004764">
    <property type="term" value="F:shikimate 3-dehydrogenase (NADP+) activity"/>
    <property type="evidence" value="ECO:0007669"/>
    <property type="project" value="UniProtKB-UniRule"/>
</dbReference>
<dbReference type="GO" id="GO:0008652">
    <property type="term" value="P:amino acid biosynthetic process"/>
    <property type="evidence" value="ECO:0007669"/>
    <property type="project" value="UniProtKB-KW"/>
</dbReference>
<dbReference type="GO" id="GO:0009073">
    <property type="term" value="P:aromatic amino acid family biosynthetic process"/>
    <property type="evidence" value="ECO:0007669"/>
    <property type="project" value="UniProtKB-KW"/>
</dbReference>
<dbReference type="GO" id="GO:0009423">
    <property type="term" value="P:chorismate biosynthetic process"/>
    <property type="evidence" value="ECO:0007669"/>
    <property type="project" value="UniProtKB-UniRule"/>
</dbReference>
<dbReference type="GO" id="GO:0019632">
    <property type="term" value="P:shikimate metabolic process"/>
    <property type="evidence" value="ECO:0007669"/>
    <property type="project" value="InterPro"/>
</dbReference>
<dbReference type="CDD" id="cd01065">
    <property type="entry name" value="NAD_bind_Shikimate_DH"/>
    <property type="match status" value="1"/>
</dbReference>
<dbReference type="FunFam" id="3.40.50.10860:FF:000006">
    <property type="entry name" value="Shikimate dehydrogenase (NADP(+))"/>
    <property type="match status" value="1"/>
</dbReference>
<dbReference type="Gene3D" id="3.40.50.10860">
    <property type="entry name" value="Leucine Dehydrogenase, chain A, domain 1"/>
    <property type="match status" value="1"/>
</dbReference>
<dbReference type="Gene3D" id="3.40.50.720">
    <property type="entry name" value="NAD(P)-binding Rossmann-like Domain"/>
    <property type="match status" value="1"/>
</dbReference>
<dbReference type="HAMAP" id="MF_00222">
    <property type="entry name" value="Shikimate_DH_AroE"/>
    <property type="match status" value="1"/>
</dbReference>
<dbReference type="InterPro" id="IPR046346">
    <property type="entry name" value="Aminoacid_DH-like_N_sf"/>
</dbReference>
<dbReference type="InterPro" id="IPR036291">
    <property type="entry name" value="NAD(P)-bd_dom_sf"/>
</dbReference>
<dbReference type="InterPro" id="IPR041121">
    <property type="entry name" value="SDH_C"/>
</dbReference>
<dbReference type="InterPro" id="IPR011342">
    <property type="entry name" value="Shikimate_DH"/>
</dbReference>
<dbReference type="InterPro" id="IPR013708">
    <property type="entry name" value="Shikimate_DH-bd_N"/>
</dbReference>
<dbReference type="InterPro" id="IPR022893">
    <property type="entry name" value="Shikimate_DH_fam"/>
</dbReference>
<dbReference type="InterPro" id="IPR006151">
    <property type="entry name" value="Shikm_DH/Glu-tRNA_Rdtase"/>
</dbReference>
<dbReference type="NCBIfam" id="TIGR00507">
    <property type="entry name" value="aroE"/>
    <property type="match status" value="1"/>
</dbReference>
<dbReference type="NCBIfam" id="NF001310">
    <property type="entry name" value="PRK00258.1-2"/>
    <property type="match status" value="1"/>
</dbReference>
<dbReference type="PANTHER" id="PTHR21089:SF1">
    <property type="entry name" value="BIFUNCTIONAL 3-DEHYDROQUINATE DEHYDRATASE_SHIKIMATE DEHYDROGENASE, CHLOROPLASTIC"/>
    <property type="match status" value="1"/>
</dbReference>
<dbReference type="PANTHER" id="PTHR21089">
    <property type="entry name" value="SHIKIMATE DEHYDROGENASE"/>
    <property type="match status" value="1"/>
</dbReference>
<dbReference type="Pfam" id="PF18317">
    <property type="entry name" value="SDH_C"/>
    <property type="match status" value="1"/>
</dbReference>
<dbReference type="Pfam" id="PF01488">
    <property type="entry name" value="Shikimate_DH"/>
    <property type="match status" value="1"/>
</dbReference>
<dbReference type="Pfam" id="PF08501">
    <property type="entry name" value="Shikimate_dh_N"/>
    <property type="match status" value="1"/>
</dbReference>
<dbReference type="SUPFAM" id="SSF53223">
    <property type="entry name" value="Aminoacid dehydrogenase-like, N-terminal domain"/>
    <property type="match status" value="1"/>
</dbReference>
<dbReference type="SUPFAM" id="SSF51735">
    <property type="entry name" value="NAD(P)-binding Rossmann-fold domains"/>
    <property type="match status" value="1"/>
</dbReference>
<organism>
    <name type="scientific">Dechloromonas aromatica (strain RCB)</name>
    <dbReference type="NCBI Taxonomy" id="159087"/>
    <lineage>
        <taxon>Bacteria</taxon>
        <taxon>Pseudomonadati</taxon>
        <taxon>Pseudomonadota</taxon>
        <taxon>Betaproteobacteria</taxon>
        <taxon>Rhodocyclales</taxon>
        <taxon>Azonexaceae</taxon>
        <taxon>Dechloromonas</taxon>
    </lineage>
</organism>
<comment type="function">
    <text evidence="1">Involved in the biosynthesis of the chorismate, which leads to the biosynthesis of aromatic amino acids. Catalyzes the reversible NADPH linked reduction of 3-dehydroshikimate (DHSA) to yield shikimate (SA).</text>
</comment>
<comment type="catalytic activity">
    <reaction evidence="1">
        <text>shikimate + NADP(+) = 3-dehydroshikimate + NADPH + H(+)</text>
        <dbReference type="Rhea" id="RHEA:17737"/>
        <dbReference type="ChEBI" id="CHEBI:15378"/>
        <dbReference type="ChEBI" id="CHEBI:16630"/>
        <dbReference type="ChEBI" id="CHEBI:36208"/>
        <dbReference type="ChEBI" id="CHEBI:57783"/>
        <dbReference type="ChEBI" id="CHEBI:58349"/>
        <dbReference type="EC" id="1.1.1.25"/>
    </reaction>
</comment>
<comment type="pathway">
    <text evidence="1">Metabolic intermediate biosynthesis; chorismate biosynthesis; chorismate from D-erythrose 4-phosphate and phosphoenolpyruvate: step 4/7.</text>
</comment>
<comment type="subunit">
    <text evidence="1">Homodimer.</text>
</comment>
<comment type="similarity">
    <text evidence="1">Belongs to the shikimate dehydrogenase family.</text>
</comment>